<feature type="chain" id="PRO_1000090479" description="UDP-N-acetylglucosamine--N-acetylmuramyl-(pentapeptide) pyrophosphoryl-undecaprenol N-acetylglucosamine transferase">
    <location>
        <begin position="1"/>
        <end position="360"/>
    </location>
</feature>
<feature type="binding site" evidence="1">
    <location>
        <position position="198"/>
    </location>
    <ligand>
        <name>UDP-N-acetyl-alpha-D-glucosamine</name>
        <dbReference type="ChEBI" id="CHEBI:57705"/>
    </ligand>
</feature>
<feature type="binding site" evidence="1">
    <location>
        <position position="289"/>
    </location>
    <ligand>
        <name>UDP-N-acetyl-alpha-D-glucosamine</name>
        <dbReference type="ChEBI" id="CHEBI:57705"/>
    </ligand>
</feature>
<sequence length="360" mass="40416">MPKKILFTGGGTVGHVTLNLILIPKFIKDGWEVHYIGDKNGIEHTEIEKSGLDVTFHAIATGKLRRYFSWQNLADVFKVALGLLQSLFILAKLRPQALFSKGGFVSVPPVVAAKLLGKPVFIHESDRSMGLANKIAYKFATTMYTTFEQEDQLSKVKHLGAVTKVFKDANQMPESTQLEAVKEYFSRDLKTLLFIGGSAGAHVFNQFISDHPELKQRYNIINITGDPHLNELSSHLYRVDYVTDLYQPLIAMADLVVTRGGSNTLFELLAMAKLHLIVPLGKEASRGDQLENATYFEKRGYAKQLQEPDLTLHNFDQAMADLFEHQADYEATMLATKEIQSPDFFYDLLRADISSAIKEK</sequence>
<gene>
    <name evidence="1" type="primary">murG</name>
    <name type="ordered locus">Spy49_1176c</name>
</gene>
<protein>
    <recommendedName>
        <fullName evidence="1">UDP-N-acetylglucosamine--N-acetylmuramyl-(pentapeptide) pyrophosphoryl-undecaprenol N-acetylglucosamine transferase</fullName>
        <ecNumber evidence="1">2.4.1.227</ecNumber>
    </recommendedName>
    <alternativeName>
        <fullName evidence="1">Undecaprenyl-PP-MurNAc-pentapeptide-UDPGlcNAc GlcNAc transferase</fullName>
    </alternativeName>
</protein>
<organism>
    <name type="scientific">Streptococcus pyogenes serotype M49 (strain NZ131)</name>
    <dbReference type="NCBI Taxonomy" id="471876"/>
    <lineage>
        <taxon>Bacteria</taxon>
        <taxon>Bacillati</taxon>
        <taxon>Bacillota</taxon>
        <taxon>Bacilli</taxon>
        <taxon>Lactobacillales</taxon>
        <taxon>Streptococcaceae</taxon>
        <taxon>Streptococcus</taxon>
    </lineage>
</organism>
<reference key="1">
    <citation type="journal article" date="2008" name="J. Bacteriol.">
        <title>Genome sequence of a nephritogenic and highly transformable M49 strain of Streptococcus pyogenes.</title>
        <authorList>
            <person name="McShan W.M."/>
            <person name="Ferretti J.J."/>
            <person name="Karasawa T."/>
            <person name="Suvorov A.N."/>
            <person name="Lin S."/>
            <person name="Qin B."/>
            <person name="Jia H."/>
            <person name="Kenton S."/>
            <person name="Najar F."/>
            <person name="Wu H."/>
            <person name="Scott J."/>
            <person name="Roe B.A."/>
            <person name="Savic D.J."/>
        </authorList>
    </citation>
    <scope>NUCLEOTIDE SEQUENCE [LARGE SCALE GENOMIC DNA]</scope>
    <source>
        <strain>NZ131</strain>
    </source>
</reference>
<comment type="function">
    <text evidence="1">Cell wall formation. Catalyzes the transfer of a GlcNAc subunit on undecaprenyl-pyrophosphoryl-MurNAc-pentapeptide (lipid intermediate I) to form undecaprenyl-pyrophosphoryl-MurNAc-(pentapeptide)GlcNAc (lipid intermediate II).</text>
</comment>
<comment type="catalytic activity">
    <reaction evidence="1">
        <text>Mur2Ac(oyl-L-Ala-gamma-D-Glu-L-Lys-D-Ala-D-Ala)-di-trans,octa-cis-undecaprenyl diphosphate + UDP-N-acetyl-alpha-D-glucosamine = beta-D-GlcNAc-(1-&gt;4)-Mur2Ac(oyl-L-Ala-gamma-D-Glu-L-Lys-D-Ala-D-Ala)-di-trans,octa-cis-undecaprenyl diphosphate + UDP + H(+)</text>
        <dbReference type="Rhea" id="RHEA:23192"/>
        <dbReference type="ChEBI" id="CHEBI:15378"/>
        <dbReference type="ChEBI" id="CHEBI:57705"/>
        <dbReference type="ChEBI" id="CHEBI:58223"/>
        <dbReference type="ChEBI" id="CHEBI:60032"/>
        <dbReference type="ChEBI" id="CHEBI:60033"/>
        <dbReference type="EC" id="2.4.1.227"/>
    </reaction>
</comment>
<comment type="pathway">
    <text evidence="1">Cell wall biogenesis; peptidoglycan biosynthesis.</text>
</comment>
<comment type="subcellular location">
    <subcellularLocation>
        <location evidence="1">Cell membrane</location>
        <topology evidence="1">Peripheral membrane protein</topology>
        <orientation evidence="1">Cytoplasmic side</orientation>
    </subcellularLocation>
</comment>
<comment type="similarity">
    <text evidence="1">Belongs to the glycosyltransferase 28 family. MurG subfamily.</text>
</comment>
<evidence type="ECO:0000255" key="1">
    <source>
        <dbReference type="HAMAP-Rule" id="MF_00033"/>
    </source>
</evidence>
<name>MURG_STRPZ</name>
<dbReference type="EC" id="2.4.1.227" evidence="1"/>
<dbReference type="EMBL" id="CP000829">
    <property type="protein sequence ID" value="ACI61464.1"/>
    <property type="molecule type" value="Genomic_DNA"/>
</dbReference>
<dbReference type="SMR" id="B5XMA2"/>
<dbReference type="CAZy" id="GT28">
    <property type="family name" value="Glycosyltransferase Family 28"/>
</dbReference>
<dbReference type="KEGG" id="soz:Spy49_1176c"/>
<dbReference type="HOGENOM" id="CLU_037404_0_0_9"/>
<dbReference type="UniPathway" id="UPA00219"/>
<dbReference type="Proteomes" id="UP000001039">
    <property type="component" value="Chromosome"/>
</dbReference>
<dbReference type="GO" id="GO:0005886">
    <property type="term" value="C:plasma membrane"/>
    <property type="evidence" value="ECO:0007669"/>
    <property type="project" value="UniProtKB-SubCell"/>
</dbReference>
<dbReference type="GO" id="GO:0050511">
    <property type="term" value="F:undecaprenyldiphospho-muramoylpentapeptide beta-N-acetylglucosaminyltransferase activity"/>
    <property type="evidence" value="ECO:0007669"/>
    <property type="project" value="UniProtKB-UniRule"/>
</dbReference>
<dbReference type="GO" id="GO:0005975">
    <property type="term" value="P:carbohydrate metabolic process"/>
    <property type="evidence" value="ECO:0007669"/>
    <property type="project" value="InterPro"/>
</dbReference>
<dbReference type="GO" id="GO:0051301">
    <property type="term" value="P:cell division"/>
    <property type="evidence" value="ECO:0007669"/>
    <property type="project" value="UniProtKB-KW"/>
</dbReference>
<dbReference type="GO" id="GO:0071555">
    <property type="term" value="P:cell wall organization"/>
    <property type="evidence" value="ECO:0007669"/>
    <property type="project" value="UniProtKB-KW"/>
</dbReference>
<dbReference type="GO" id="GO:0030259">
    <property type="term" value="P:lipid glycosylation"/>
    <property type="evidence" value="ECO:0007669"/>
    <property type="project" value="UniProtKB-UniRule"/>
</dbReference>
<dbReference type="GO" id="GO:0009252">
    <property type="term" value="P:peptidoglycan biosynthetic process"/>
    <property type="evidence" value="ECO:0007669"/>
    <property type="project" value="UniProtKB-UniRule"/>
</dbReference>
<dbReference type="GO" id="GO:0008360">
    <property type="term" value="P:regulation of cell shape"/>
    <property type="evidence" value="ECO:0007669"/>
    <property type="project" value="UniProtKB-KW"/>
</dbReference>
<dbReference type="CDD" id="cd03785">
    <property type="entry name" value="GT28_MurG"/>
    <property type="match status" value="1"/>
</dbReference>
<dbReference type="Gene3D" id="3.40.50.2000">
    <property type="entry name" value="Glycogen Phosphorylase B"/>
    <property type="match status" value="2"/>
</dbReference>
<dbReference type="HAMAP" id="MF_00033">
    <property type="entry name" value="MurG"/>
    <property type="match status" value="1"/>
</dbReference>
<dbReference type="InterPro" id="IPR006009">
    <property type="entry name" value="GlcNAc_MurG"/>
</dbReference>
<dbReference type="InterPro" id="IPR007235">
    <property type="entry name" value="Glyco_trans_28_C"/>
</dbReference>
<dbReference type="InterPro" id="IPR004276">
    <property type="entry name" value="GlycoTrans_28_N"/>
</dbReference>
<dbReference type="PANTHER" id="PTHR21015:SF27">
    <property type="entry name" value="UDP-N-ACETYLGLUCOSAMINE--N-ACETYLMURAMYL-(PENTAPEPTIDE) PYROPHOSPHORYL-UNDECAPRENOL N-ACETYLGLUCOSAMINE TRANSFERASE"/>
    <property type="match status" value="1"/>
</dbReference>
<dbReference type="PANTHER" id="PTHR21015">
    <property type="entry name" value="UDP-N-ACETYLGLUCOSAMINE--N-ACETYLMURAMYL-(PENTAPEPTIDE) PYROPHOSPHORYL-UNDECAPRENOL N-ACETYLGLUCOSAMINE TRANSFERASE 1"/>
    <property type="match status" value="1"/>
</dbReference>
<dbReference type="Pfam" id="PF04101">
    <property type="entry name" value="Glyco_tran_28_C"/>
    <property type="match status" value="1"/>
</dbReference>
<dbReference type="Pfam" id="PF03033">
    <property type="entry name" value="Glyco_transf_28"/>
    <property type="match status" value="1"/>
</dbReference>
<dbReference type="SUPFAM" id="SSF53756">
    <property type="entry name" value="UDP-Glycosyltransferase/glycogen phosphorylase"/>
    <property type="match status" value="1"/>
</dbReference>
<proteinExistence type="inferred from homology"/>
<accession>B5XMA2</accession>
<keyword id="KW-0131">Cell cycle</keyword>
<keyword id="KW-0132">Cell division</keyword>
<keyword id="KW-1003">Cell membrane</keyword>
<keyword id="KW-0133">Cell shape</keyword>
<keyword id="KW-0961">Cell wall biogenesis/degradation</keyword>
<keyword id="KW-0328">Glycosyltransferase</keyword>
<keyword id="KW-0472">Membrane</keyword>
<keyword id="KW-0573">Peptidoglycan synthesis</keyword>
<keyword id="KW-0808">Transferase</keyword>